<comment type="function">
    <text evidence="1">Catalyzes the attachment of isoleucine to tRNA(Ile). As IleRS can inadvertently accommodate and process structurally similar amino acids such as valine, to avoid such errors it has two additional distinct tRNA(Ile)-dependent editing activities. One activity is designated as 'pretransfer' editing and involves the hydrolysis of activated Val-AMP. The other activity is designated 'posttransfer' editing and involves deacylation of mischarged Val-tRNA(Ile).</text>
</comment>
<comment type="catalytic activity">
    <reaction evidence="1">
        <text>tRNA(Ile) + L-isoleucine + ATP = L-isoleucyl-tRNA(Ile) + AMP + diphosphate</text>
        <dbReference type="Rhea" id="RHEA:11060"/>
        <dbReference type="Rhea" id="RHEA-COMP:9666"/>
        <dbReference type="Rhea" id="RHEA-COMP:9695"/>
        <dbReference type="ChEBI" id="CHEBI:30616"/>
        <dbReference type="ChEBI" id="CHEBI:33019"/>
        <dbReference type="ChEBI" id="CHEBI:58045"/>
        <dbReference type="ChEBI" id="CHEBI:78442"/>
        <dbReference type="ChEBI" id="CHEBI:78528"/>
        <dbReference type="ChEBI" id="CHEBI:456215"/>
        <dbReference type="EC" id="6.1.1.5"/>
    </reaction>
</comment>
<comment type="cofactor">
    <cofactor evidence="1">
        <name>Zn(2+)</name>
        <dbReference type="ChEBI" id="CHEBI:29105"/>
    </cofactor>
    <text evidence="1">Binds 1 zinc ion per subunit.</text>
</comment>
<comment type="subunit">
    <text evidence="1">Monomer.</text>
</comment>
<comment type="subcellular location">
    <subcellularLocation>
        <location evidence="1">Cytoplasm</location>
    </subcellularLocation>
</comment>
<comment type="domain">
    <text evidence="1">IleRS has two distinct active sites: one for aminoacylation and one for editing. The misactivated valine is translocated from the active site to the editing site, which sterically excludes the correctly activated isoleucine. The single editing site contains two valyl binding pockets, one specific for each substrate (Val-AMP or Val-tRNA(Ile)).</text>
</comment>
<comment type="similarity">
    <text evidence="1">Belongs to the class-I aminoacyl-tRNA synthetase family. IleS type 1 subfamily.</text>
</comment>
<sequence>MEYKNTLLMPKTEFPMRGNLPKREPAIQEKWAEMNIYEKVQERTKGRPLFVLHDGPPYANGDIHMGHALNKVLKDFIVRYKSMTGYCAPYVPGWDTHGLPIEQALTNKGVKRKEMPVAEFRKLCAEYAYEQVNRQREQFKRLGVRADWDHPYITLEPAYEAQQIKVFGEMAKKGYIYKGQKPVYWSPTSESALAEAEIEYKDKKSASIYVAFEVKDGKDVLEGDEKFIIWTTTPWTLPANLGISVHPKLEYSIVKVNDEKYIIASDLFDTVAKTLEWENPEVVRTVKGSELEYTVAKHPFYDRDSLVMLGEHVTTDAGTGCVHTAPGHGEDDFIVGQKYGLEVLCPVDDKGVLTSEAPGFEGLFYDKANKPITEKLEEVGALLKLTFITHSYPHDWRTKKPIIFRATAQWFASIEAFRSELLQAVKETKWVPAWGETRLHNMVRDRGDWCISRQRAWGVPIPVFYAENNDPIITDETINHVANLFREHGSNVWFEREAKDLLPEGFTHPSSPNGEFRKETDIMDVWFDSGSSHQAVLEERDDLQRPADLYLEGSDQYRGWFNSSLSTAVAVTGKAPYKGVLSHGFVLDGEGRKMSKSIGNIVVPKKIMDQLGGDILRLWVSSVDYQSDVRISDDILKQVAEVYRKIRNTFRFLLGNLADFNPAQDAVAKAELREVDRYMLVKLNDLITKVKEAYETYDFAAVYHAIHNFCTIDLSSFYLDFAKDILYIEAANHHDRRAIQTVLYDVLVALTKLVTPILPHTADEVWPYIPGVTEESVQLTDMPEAIELQDGEALKTKWDAFMTLRSDVLKALEVARNEKVIGKSLTASITLFPTAEMKEMLESIQEDLKQLFIVSEYKLGGTIEEAPADAQKYEHTAVLVTQANGETCERCWVVSETVGNDNEYKTLCERCATVVKENYVK</sequence>
<feature type="chain" id="PRO_1000088542" description="Isoleucine--tRNA ligase">
    <location>
        <begin position="1"/>
        <end position="921"/>
    </location>
</feature>
<feature type="short sequence motif" description="'HIGH' region">
    <location>
        <begin position="57"/>
        <end position="67"/>
    </location>
</feature>
<feature type="short sequence motif" description="'KMSKS' region">
    <location>
        <begin position="593"/>
        <end position="597"/>
    </location>
</feature>
<feature type="binding site" evidence="1">
    <location>
        <position position="552"/>
    </location>
    <ligand>
        <name>L-isoleucyl-5'-AMP</name>
        <dbReference type="ChEBI" id="CHEBI:178002"/>
    </ligand>
</feature>
<feature type="binding site" evidence="1">
    <location>
        <position position="596"/>
    </location>
    <ligand>
        <name>ATP</name>
        <dbReference type="ChEBI" id="CHEBI:30616"/>
    </ligand>
</feature>
<feature type="binding site" evidence="1">
    <location>
        <position position="888"/>
    </location>
    <ligand>
        <name>Zn(2+)</name>
        <dbReference type="ChEBI" id="CHEBI:29105"/>
    </ligand>
</feature>
<feature type="binding site" evidence="1">
    <location>
        <position position="891"/>
    </location>
    <ligand>
        <name>Zn(2+)</name>
        <dbReference type="ChEBI" id="CHEBI:29105"/>
    </ligand>
</feature>
<feature type="binding site" evidence="1">
    <location>
        <position position="908"/>
    </location>
    <ligand>
        <name>Zn(2+)</name>
        <dbReference type="ChEBI" id="CHEBI:29105"/>
    </ligand>
</feature>
<feature type="binding site" evidence="1">
    <location>
        <position position="911"/>
    </location>
    <ligand>
        <name>Zn(2+)</name>
        <dbReference type="ChEBI" id="CHEBI:29105"/>
    </ligand>
</feature>
<accession>A7GRM0</accession>
<keyword id="KW-0030">Aminoacyl-tRNA synthetase</keyword>
<keyword id="KW-0067">ATP-binding</keyword>
<keyword id="KW-0963">Cytoplasm</keyword>
<keyword id="KW-0436">Ligase</keyword>
<keyword id="KW-0479">Metal-binding</keyword>
<keyword id="KW-0547">Nucleotide-binding</keyword>
<keyword id="KW-0648">Protein biosynthesis</keyword>
<keyword id="KW-0862">Zinc</keyword>
<reference key="1">
    <citation type="journal article" date="2008" name="Chem. Biol. Interact.">
        <title>Extending the Bacillus cereus group genomics to putative food-borne pathogens of different toxicity.</title>
        <authorList>
            <person name="Lapidus A."/>
            <person name="Goltsman E."/>
            <person name="Auger S."/>
            <person name="Galleron N."/>
            <person name="Segurens B."/>
            <person name="Dossat C."/>
            <person name="Land M.L."/>
            <person name="Broussolle V."/>
            <person name="Brillard J."/>
            <person name="Guinebretiere M.-H."/>
            <person name="Sanchis V."/>
            <person name="Nguen-the C."/>
            <person name="Lereclus D."/>
            <person name="Richardson P."/>
            <person name="Wincker P."/>
            <person name="Weissenbach J."/>
            <person name="Ehrlich S.D."/>
            <person name="Sorokin A."/>
        </authorList>
    </citation>
    <scope>NUCLEOTIDE SEQUENCE [LARGE SCALE GENOMIC DNA]</scope>
    <source>
        <strain>DSM 22905 / CIP 110041 / 391-98 / NVH 391-98</strain>
    </source>
</reference>
<protein>
    <recommendedName>
        <fullName evidence="1">Isoleucine--tRNA ligase</fullName>
        <ecNumber evidence="1">6.1.1.5</ecNumber>
    </recommendedName>
    <alternativeName>
        <fullName evidence="1">Isoleucyl-tRNA synthetase</fullName>
        <shortName evidence="1">IleRS</shortName>
    </alternativeName>
</protein>
<proteinExistence type="inferred from homology"/>
<dbReference type="EC" id="6.1.1.5" evidence="1"/>
<dbReference type="EMBL" id="CP000764">
    <property type="protein sequence ID" value="ABS22778.1"/>
    <property type="molecule type" value="Genomic_DNA"/>
</dbReference>
<dbReference type="RefSeq" id="WP_012094985.1">
    <property type="nucleotide sequence ID" value="NC_009674.1"/>
</dbReference>
<dbReference type="SMR" id="A7GRM0"/>
<dbReference type="STRING" id="315749.Bcer98_2544"/>
<dbReference type="GeneID" id="33897798"/>
<dbReference type="KEGG" id="bcy:Bcer98_2544"/>
<dbReference type="eggNOG" id="COG0060">
    <property type="taxonomic scope" value="Bacteria"/>
</dbReference>
<dbReference type="HOGENOM" id="CLU_001493_7_1_9"/>
<dbReference type="OrthoDB" id="9810365at2"/>
<dbReference type="Proteomes" id="UP000002300">
    <property type="component" value="Chromosome"/>
</dbReference>
<dbReference type="GO" id="GO:0005829">
    <property type="term" value="C:cytosol"/>
    <property type="evidence" value="ECO:0007669"/>
    <property type="project" value="TreeGrafter"/>
</dbReference>
<dbReference type="GO" id="GO:0002161">
    <property type="term" value="F:aminoacyl-tRNA deacylase activity"/>
    <property type="evidence" value="ECO:0007669"/>
    <property type="project" value="InterPro"/>
</dbReference>
<dbReference type="GO" id="GO:0005524">
    <property type="term" value="F:ATP binding"/>
    <property type="evidence" value="ECO:0007669"/>
    <property type="project" value="UniProtKB-UniRule"/>
</dbReference>
<dbReference type="GO" id="GO:0004822">
    <property type="term" value="F:isoleucine-tRNA ligase activity"/>
    <property type="evidence" value="ECO:0007669"/>
    <property type="project" value="UniProtKB-UniRule"/>
</dbReference>
<dbReference type="GO" id="GO:0000049">
    <property type="term" value="F:tRNA binding"/>
    <property type="evidence" value="ECO:0007669"/>
    <property type="project" value="InterPro"/>
</dbReference>
<dbReference type="GO" id="GO:0008270">
    <property type="term" value="F:zinc ion binding"/>
    <property type="evidence" value="ECO:0007669"/>
    <property type="project" value="UniProtKB-UniRule"/>
</dbReference>
<dbReference type="GO" id="GO:0006428">
    <property type="term" value="P:isoleucyl-tRNA aminoacylation"/>
    <property type="evidence" value="ECO:0007669"/>
    <property type="project" value="UniProtKB-UniRule"/>
</dbReference>
<dbReference type="CDD" id="cd07960">
    <property type="entry name" value="Anticodon_Ia_Ile_BEm"/>
    <property type="match status" value="1"/>
</dbReference>
<dbReference type="CDD" id="cd00818">
    <property type="entry name" value="IleRS_core"/>
    <property type="match status" value="1"/>
</dbReference>
<dbReference type="FunFam" id="1.10.10.830:FF:000001">
    <property type="entry name" value="Isoleucine--tRNA ligase"/>
    <property type="match status" value="1"/>
</dbReference>
<dbReference type="FunFam" id="1.10.730.20:FF:000001">
    <property type="entry name" value="Isoleucine--tRNA ligase"/>
    <property type="match status" value="1"/>
</dbReference>
<dbReference type="FunFam" id="3.40.50.620:FF:000152">
    <property type="entry name" value="Isoleucine--tRNA ligase"/>
    <property type="match status" value="1"/>
</dbReference>
<dbReference type="FunFam" id="3.90.740.10:FF:000006">
    <property type="entry name" value="Isoleucine--tRNA ligase"/>
    <property type="match status" value="1"/>
</dbReference>
<dbReference type="Gene3D" id="1.10.730.20">
    <property type="match status" value="1"/>
</dbReference>
<dbReference type="Gene3D" id="3.40.50.620">
    <property type="entry name" value="HUPs"/>
    <property type="match status" value="2"/>
</dbReference>
<dbReference type="Gene3D" id="1.10.10.830">
    <property type="entry name" value="Ile-tRNA synthetase CP2 domain-like"/>
    <property type="match status" value="1"/>
</dbReference>
<dbReference type="Gene3D" id="3.90.740.10">
    <property type="entry name" value="Valyl/Leucyl/Isoleucyl-tRNA synthetase, editing domain"/>
    <property type="match status" value="1"/>
</dbReference>
<dbReference type="HAMAP" id="MF_02002">
    <property type="entry name" value="Ile_tRNA_synth_type1"/>
    <property type="match status" value="1"/>
</dbReference>
<dbReference type="InterPro" id="IPR001412">
    <property type="entry name" value="aa-tRNA-synth_I_CS"/>
</dbReference>
<dbReference type="InterPro" id="IPR002300">
    <property type="entry name" value="aa-tRNA-synth_Ia"/>
</dbReference>
<dbReference type="InterPro" id="IPR033708">
    <property type="entry name" value="Anticodon_Ile_BEm"/>
</dbReference>
<dbReference type="InterPro" id="IPR002301">
    <property type="entry name" value="Ile-tRNA-ligase"/>
</dbReference>
<dbReference type="InterPro" id="IPR023585">
    <property type="entry name" value="Ile-tRNA-ligase_type1"/>
</dbReference>
<dbReference type="InterPro" id="IPR050081">
    <property type="entry name" value="Ile-tRNA_ligase"/>
</dbReference>
<dbReference type="InterPro" id="IPR013155">
    <property type="entry name" value="M/V/L/I-tRNA-synth_anticd-bd"/>
</dbReference>
<dbReference type="InterPro" id="IPR014729">
    <property type="entry name" value="Rossmann-like_a/b/a_fold"/>
</dbReference>
<dbReference type="InterPro" id="IPR009080">
    <property type="entry name" value="tRNAsynth_Ia_anticodon-bd"/>
</dbReference>
<dbReference type="InterPro" id="IPR009008">
    <property type="entry name" value="Val/Leu/Ile-tRNA-synth_edit"/>
</dbReference>
<dbReference type="InterPro" id="IPR010663">
    <property type="entry name" value="Znf_FPG/IleRS"/>
</dbReference>
<dbReference type="NCBIfam" id="TIGR00392">
    <property type="entry name" value="ileS"/>
    <property type="match status" value="1"/>
</dbReference>
<dbReference type="PANTHER" id="PTHR42765:SF1">
    <property type="entry name" value="ISOLEUCINE--TRNA LIGASE, MITOCHONDRIAL"/>
    <property type="match status" value="1"/>
</dbReference>
<dbReference type="PANTHER" id="PTHR42765">
    <property type="entry name" value="SOLEUCYL-TRNA SYNTHETASE"/>
    <property type="match status" value="1"/>
</dbReference>
<dbReference type="Pfam" id="PF08264">
    <property type="entry name" value="Anticodon_1"/>
    <property type="match status" value="1"/>
</dbReference>
<dbReference type="Pfam" id="PF00133">
    <property type="entry name" value="tRNA-synt_1"/>
    <property type="match status" value="1"/>
</dbReference>
<dbReference type="Pfam" id="PF06827">
    <property type="entry name" value="zf-FPG_IleRS"/>
    <property type="match status" value="1"/>
</dbReference>
<dbReference type="PRINTS" id="PR00984">
    <property type="entry name" value="TRNASYNTHILE"/>
</dbReference>
<dbReference type="SUPFAM" id="SSF47323">
    <property type="entry name" value="Anticodon-binding domain of a subclass of class I aminoacyl-tRNA synthetases"/>
    <property type="match status" value="1"/>
</dbReference>
<dbReference type="SUPFAM" id="SSF52374">
    <property type="entry name" value="Nucleotidylyl transferase"/>
    <property type="match status" value="1"/>
</dbReference>
<dbReference type="SUPFAM" id="SSF50677">
    <property type="entry name" value="ValRS/IleRS/LeuRS editing domain"/>
    <property type="match status" value="1"/>
</dbReference>
<dbReference type="PROSITE" id="PS00178">
    <property type="entry name" value="AA_TRNA_LIGASE_I"/>
    <property type="match status" value="1"/>
</dbReference>
<name>SYI_BACCN</name>
<evidence type="ECO:0000255" key="1">
    <source>
        <dbReference type="HAMAP-Rule" id="MF_02002"/>
    </source>
</evidence>
<gene>
    <name evidence="1" type="primary">ileS</name>
    <name type="ordered locus">Bcer98_2544</name>
</gene>
<organism>
    <name type="scientific">Bacillus cytotoxicus (strain DSM 22905 / CIP 110041 / 391-98 / NVH 391-98)</name>
    <dbReference type="NCBI Taxonomy" id="315749"/>
    <lineage>
        <taxon>Bacteria</taxon>
        <taxon>Bacillati</taxon>
        <taxon>Bacillota</taxon>
        <taxon>Bacilli</taxon>
        <taxon>Bacillales</taxon>
        <taxon>Bacillaceae</taxon>
        <taxon>Bacillus</taxon>
        <taxon>Bacillus cereus group</taxon>
    </lineage>
</organism>